<accession>Q15697</accession>
<accession>Q53Y68</accession>
<accession>Q9BQ34</accession>
<evidence type="ECO:0000255" key="1">
    <source>
        <dbReference type="PROSITE-ProRule" id="PRU00042"/>
    </source>
</evidence>
<evidence type="ECO:0000255" key="2">
    <source>
        <dbReference type="PROSITE-ProRule" id="PRU00187"/>
    </source>
</evidence>
<evidence type="ECO:0000256" key="3">
    <source>
        <dbReference type="SAM" id="MobiDB-lite"/>
    </source>
</evidence>
<evidence type="ECO:0000269" key="4">
    <source>
    </source>
</evidence>
<evidence type="ECO:0000269" key="5">
    <source>
    </source>
</evidence>
<evidence type="ECO:0000303" key="6">
    <source>
    </source>
</evidence>
<evidence type="ECO:0000303" key="7">
    <source ref="2"/>
</evidence>
<evidence type="ECO:0000305" key="8"/>
<evidence type="ECO:0007744" key="9">
    <source>
    </source>
</evidence>
<evidence type="ECO:0007829" key="10">
    <source>
        <dbReference type="PDB" id="1Y7Q"/>
    </source>
</evidence>
<keyword id="KW-0002">3D-structure</keyword>
<keyword id="KW-0025">Alternative splicing</keyword>
<keyword id="KW-0238">DNA-binding</keyword>
<keyword id="KW-1017">Isopeptide bond</keyword>
<keyword id="KW-0479">Metal-binding</keyword>
<keyword id="KW-0539">Nucleus</keyword>
<keyword id="KW-1267">Proteomics identification</keyword>
<keyword id="KW-1185">Reference proteome</keyword>
<keyword id="KW-0677">Repeat</keyword>
<keyword id="KW-0678">Repressor</keyword>
<keyword id="KW-0804">Transcription</keyword>
<keyword id="KW-0805">Transcription regulation</keyword>
<keyword id="KW-0832">Ubl conjugation</keyword>
<keyword id="KW-0862">Zinc</keyword>
<keyword id="KW-0863">Zinc-finger</keyword>
<dbReference type="EMBL" id="U31248">
    <property type="protein sequence ID" value="AAB04897.1"/>
    <property type="molecule type" value="mRNA"/>
</dbReference>
<dbReference type="EMBL" id="BT006923">
    <property type="protein sequence ID" value="AAP35569.1"/>
    <property type="molecule type" value="mRNA"/>
</dbReference>
<dbReference type="EMBL" id="BC000876">
    <property type="protein sequence ID" value="AAH00876.1"/>
    <property type="molecule type" value="mRNA"/>
</dbReference>
<dbReference type="EMBL" id="BC001161">
    <property type="protein sequence ID" value="AAH01161.1"/>
    <property type="molecule type" value="mRNA"/>
</dbReference>
<dbReference type="CCDS" id="CCDS10504.1">
    <molecule id="Q15697-1"/>
</dbReference>
<dbReference type="CCDS" id="CCDS32380.1">
    <molecule id="Q15697-2"/>
</dbReference>
<dbReference type="PIR" id="I39152">
    <property type="entry name" value="I39152"/>
</dbReference>
<dbReference type="RefSeq" id="NP_001027463.1">
    <molecule id="Q15697-2"/>
    <property type="nucleotide sequence ID" value="NM_001032292.3"/>
</dbReference>
<dbReference type="RefSeq" id="NP_001334797.1">
    <molecule id="Q15697-1"/>
    <property type="nucleotide sequence ID" value="NM_001347868.2"/>
</dbReference>
<dbReference type="RefSeq" id="NP_003441.1">
    <molecule id="Q15697-1"/>
    <property type="nucleotide sequence ID" value="NM_003450.3"/>
</dbReference>
<dbReference type="PDB" id="1Y7Q">
    <property type="method" value="NMR"/>
    <property type="chains" value="A/B=37-132"/>
</dbReference>
<dbReference type="PDBsum" id="1Y7Q"/>
<dbReference type="SMR" id="Q15697"/>
<dbReference type="BioGRID" id="113516">
    <property type="interactions" value="70"/>
</dbReference>
<dbReference type="FunCoup" id="Q15697">
    <property type="interactions" value="1538"/>
</dbReference>
<dbReference type="IntAct" id="Q15697">
    <property type="interactions" value="50"/>
</dbReference>
<dbReference type="MINT" id="Q15697"/>
<dbReference type="STRING" id="9606.ENSP00000268655"/>
<dbReference type="GlyGen" id="Q15697">
    <property type="glycosylation" value="1 site, 1 O-linked glycan (1 site)"/>
</dbReference>
<dbReference type="iPTMnet" id="Q15697"/>
<dbReference type="PhosphoSitePlus" id="Q15697"/>
<dbReference type="BioMuta" id="ZNF174"/>
<dbReference type="DMDM" id="3123173"/>
<dbReference type="jPOST" id="Q15697"/>
<dbReference type="MassIVE" id="Q15697"/>
<dbReference type="PaxDb" id="9606-ENSP00000268655"/>
<dbReference type="PeptideAtlas" id="Q15697"/>
<dbReference type="ProteomicsDB" id="60705">
    <molecule id="Q15697-1"/>
</dbReference>
<dbReference type="ProteomicsDB" id="60706">
    <molecule id="Q15697-2"/>
</dbReference>
<dbReference type="ABCD" id="Q15697">
    <property type="antibodies" value="2 sequenced antibodies"/>
</dbReference>
<dbReference type="Antibodypedia" id="1362">
    <property type="antibodies" value="219 antibodies from 29 providers"/>
</dbReference>
<dbReference type="DNASU" id="7727"/>
<dbReference type="Ensembl" id="ENST00000268655.5">
    <molecule id="Q15697-1"/>
    <property type="protein sequence ID" value="ENSP00000268655.4"/>
    <property type="gene ID" value="ENSG00000103343.13"/>
</dbReference>
<dbReference type="Ensembl" id="ENST00000344823.9">
    <molecule id="Q15697-2"/>
    <property type="protein sequence ID" value="ENSP00000339781.5"/>
    <property type="gene ID" value="ENSG00000103343.13"/>
</dbReference>
<dbReference type="Ensembl" id="ENST00000571936.5">
    <molecule id="Q15697-1"/>
    <property type="protein sequence ID" value="ENSP00000460397.1"/>
    <property type="gene ID" value="ENSG00000103343.13"/>
</dbReference>
<dbReference type="Ensembl" id="ENST00000575752.5">
    <molecule id="Q15697-2"/>
    <property type="protein sequence ID" value="ENSP00000461502.1"/>
    <property type="gene ID" value="ENSG00000103343.13"/>
</dbReference>
<dbReference type="GeneID" id="7727"/>
<dbReference type="KEGG" id="hsa:7727"/>
<dbReference type="MANE-Select" id="ENST00000268655.5">
    <property type="protein sequence ID" value="ENSP00000268655.4"/>
    <property type="RefSeq nucleotide sequence ID" value="NM_003450.3"/>
    <property type="RefSeq protein sequence ID" value="NP_003441.1"/>
</dbReference>
<dbReference type="UCSC" id="uc002cvb.4">
    <molecule id="Q15697-1"/>
    <property type="organism name" value="human"/>
</dbReference>
<dbReference type="AGR" id="HGNC:12963"/>
<dbReference type="CTD" id="7727"/>
<dbReference type="GeneCards" id="ZNF174"/>
<dbReference type="HGNC" id="HGNC:12963">
    <property type="gene designation" value="ZNF174"/>
</dbReference>
<dbReference type="HPA" id="ENSG00000103343">
    <property type="expression patterns" value="Low tissue specificity"/>
</dbReference>
<dbReference type="MalaCards" id="ZNF174"/>
<dbReference type="MIM" id="603900">
    <property type="type" value="gene"/>
</dbReference>
<dbReference type="neXtProt" id="NX_Q15697"/>
<dbReference type="OpenTargets" id="ENSG00000103343"/>
<dbReference type="PharmGKB" id="PA37545"/>
<dbReference type="VEuPathDB" id="HostDB:ENSG00000103343"/>
<dbReference type="eggNOG" id="KOG1721">
    <property type="taxonomic scope" value="Eukaryota"/>
</dbReference>
<dbReference type="GeneTree" id="ENSGT00940000162024"/>
<dbReference type="HOGENOM" id="CLU_002678_53_2_1"/>
<dbReference type="InParanoid" id="Q15697"/>
<dbReference type="OMA" id="QHWEKSQ"/>
<dbReference type="OrthoDB" id="9439903at2759"/>
<dbReference type="PAN-GO" id="Q15697">
    <property type="GO annotations" value="3 GO annotations based on evolutionary models"/>
</dbReference>
<dbReference type="PhylomeDB" id="Q15697"/>
<dbReference type="TreeFam" id="TF338582"/>
<dbReference type="PathwayCommons" id="Q15697"/>
<dbReference type="SignaLink" id="Q15697"/>
<dbReference type="BioGRID-ORCS" id="7727">
    <property type="hits" value="25 hits in 1177 CRISPR screens"/>
</dbReference>
<dbReference type="ChiTaRS" id="ZNF174">
    <property type="organism name" value="human"/>
</dbReference>
<dbReference type="EvolutionaryTrace" id="Q15697"/>
<dbReference type="GenomeRNAi" id="7727"/>
<dbReference type="Pharos" id="Q15697">
    <property type="development level" value="Tbio"/>
</dbReference>
<dbReference type="PRO" id="PR:Q15697"/>
<dbReference type="Proteomes" id="UP000005640">
    <property type="component" value="Chromosome 16"/>
</dbReference>
<dbReference type="RNAct" id="Q15697">
    <property type="molecule type" value="protein"/>
</dbReference>
<dbReference type="Bgee" id="ENSG00000103343">
    <property type="expression patterns" value="Expressed in endothelial cell and 126 other cell types or tissues"/>
</dbReference>
<dbReference type="ExpressionAtlas" id="Q15697">
    <property type="expression patterns" value="baseline and differential"/>
</dbReference>
<dbReference type="GO" id="GO:0000785">
    <property type="term" value="C:chromatin"/>
    <property type="evidence" value="ECO:0000247"/>
    <property type="project" value="NTNU_SB"/>
</dbReference>
<dbReference type="GO" id="GO:0001650">
    <property type="term" value="C:fibrillar center"/>
    <property type="evidence" value="ECO:0000314"/>
    <property type="project" value="HPA"/>
</dbReference>
<dbReference type="GO" id="GO:0016604">
    <property type="term" value="C:nuclear body"/>
    <property type="evidence" value="ECO:0000314"/>
    <property type="project" value="HPA"/>
</dbReference>
<dbReference type="GO" id="GO:0005634">
    <property type="term" value="C:nucleus"/>
    <property type="evidence" value="ECO:0000303"/>
    <property type="project" value="UniProtKB"/>
</dbReference>
<dbReference type="GO" id="GO:0003700">
    <property type="term" value="F:DNA-binding transcription factor activity"/>
    <property type="evidence" value="ECO:0000314"/>
    <property type="project" value="UniProtKB"/>
</dbReference>
<dbReference type="GO" id="GO:0000981">
    <property type="term" value="F:DNA-binding transcription factor activity, RNA polymerase II-specific"/>
    <property type="evidence" value="ECO:0000247"/>
    <property type="project" value="NTNU_SB"/>
</dbReference>
<dbReference type="GO" id="GO:0042803">
    <property type="term" value="F:protein homodimerization activity"/>
    <property type="evidence" value="ECO:0000353"/>
    <property type="project" value="UniProtKB"/>
</dbReference>
<dbReference type="GO" id="GO:0000978">
    <property type="term" value="F:RNA polymerase II cis-regulatory region sequence-specific DNA binding"/>
    <property type="evidence" value="ECO:0000318"/>
    <property type="project" value="GO_Central"/>
</dbReference>
<dbReference type="GO" id="GO:0043565">
    <property type="term" value="F:sequence-specific DNA binding"/>
    <property type="evidence" value="ECO:0000314"/>
    <property type="project" value="NTNU_SB"/>
</dbReference>
<dbReference type="GO" id="GO:1990837">
    <property type="term" value="F:sequence-specific double-stranded DNA binding"/>
    <property type="evidence" value="ECO:0000314"/>
    <property type="project" value="ARUK-UCL"/>
</dbReference>
<dbReference type="GO" id="GO:0000976">
    <property type="term" value="F:transcription cis-regulatory region binding"/>
    <property type="evidence" value="ECO:0000314"/>
    <property type="project" value="UniProtKB"/>
</dbReference>
<dbReference type="GO" id="GO:0008270">
    <property type="term" value="F:zinc ion binding"/>
    <property type="evidence" value="ECO:0007669"/>
    <property type="project" value="UniProtKB-KW"/>
</dbReference>
<dbReference type="GO" id="GO:0045892">
    <property type="term" value="P:negative regulation of DNA-templated transcription"/>
    <property type="evidence" value="ECO:0000314"/>
    <property type="project" value="UniProtKB"/>
</dbReference>
<dbReference type="GO" id="GO:0000122">
    <property type="term" value="P:negative regulation of transcription by RNA polymerase II"/>
    <property type="evidence" value="ECO:0000314"/>
    <property type="project" value="UniProtKB"/>
</dbReference>
<dbReference type="GO" id="GO:0006357">
    <property type="term" value="P:regulation of transcription by RNA polymerase II"/>
    <property type="evidence" value="ECO:0000318"/>
    <property type="project" value="GO_Central"/>
</dbReference>
<dbReference type="CDD" id="cd07936">
    <property type="entry name" value="SCAN"/>
    <property type="match status" value="1"/>
</dbReference>
<dbReference type="FunFam" id="3.30.160.60:FF:001486">
    <property type="entry name" value="Zinc finger protein 174"/>
    <property type="match status" value="1"/>
</dbReference>
<dbReference type="FunFam" id="3.30.160.60:FF:000755">
    <property type="entry name" value="zinc finger protein 174"/>
    <property type="match status" value="1"/>
</dbReference>
<dbReference type="FunFam" id="1.10.4020.10:FF:000001">
    <property type="entry name" value="zinc finger protein 263 isoform X1"/>
    <property type="match status" value="1"/>
</dbReference>
<dbReference type="FunFam" id="3.30.160.60:FF:000538">
    <property type="entry name" value="zinc finger protein 853"/>
    <property type="match status" value="1"/>
</dbReference>
<dbReference type="Gene3D" id="3.30.160.60">
    <property type="entry name" value="Classic Zinc Finger"/>
    <property type="match status" value="3"/>
</dbReference>
<dbReference type="Gene3D" id="1.10.4020.10">
    <property type="entry name" value="DNA breaking-rejoining enzymes"/>
    <property type="match status" value="1"/>
</dbReference>
<dbReference type="InterPro" id="IPR050916">
    <property type="entry name" value="SCAN-C2H2_zinc_finger"/>
</dbReference>
<dbReference type="InterPro" id="IPR003309">
    <property type="entry name" value="SCAN_dom"/>
</dbReference>
<dbReference type="InterPro" id="IPR038269">
    <property type="entry name" value="SCAN_sf"/>
</dbReference>
<dbReference type="InterPro" id="IPR036236">
    <property type="entry name" value="Znf_C2H2_sf"/>
</dbReference>
<dbReference type="InterPro" id="IPR013087">
    <property type="entry name" value="Znf_C2H2_type"/>
</dbReference>
<dbReference type="PANTHER" id="PTHR45935">
    <property type="entry name" value="PROTEIN ZBED8-RELATED"/>
    <property type="match status" value="1"/>
</dbReference>
<dbReference type="PANTHER" id="PTHR45935:SF15">
    <property type="entry name" value="SCAN BOX DOMAIN-CONTAINING PROTEIN"/>
    <property type="match status" value="1"/>
</dbReference>
<dbReference type="Pfam" id="PF02023">
    <property type="entry name" value="SCAN"/>
    <property type="match status" value="1"/>
</dbReference>
<dbReference type="Pfam" id="PF00096">
    <property type="entry name" value="zf-C2H2"/>
    <property type="match status" value="3"/>
</dbReference>
<dbReference type="SMART" id="SM00431">
    <property type="entry name" value="SCAN"/>
    <property type="match status" value="1"/>
</dbReference>
<dbReference type="SMART" id="SM00355">
    <property type="entry name" value="ZnF_C2H2"/>
    <property type="match status" value="3"/>
</dbReference>
<dbReference type="SUPFAM" id="SSF57667">
    <property type="entry name" value="beta-beta-alpha zinc fingers"/>
    <property type="match status" value="2"/>
</dbReference>
<dbReference type="SUPFAM" id="SSF47353">
    <property type="entry name" value="Retrovirus capsid dimerization domain-like"/>
    <property type="match status" value="1"/>
</dbReference>
<dbReference type="PROSITE" id="PS50804">
    <property type="entry name" value="SCAN_BOX"/>
    <property type="match status" value="1"/>
</dbReference>
<dbReference type="PROSITE" id="PS00028">
    <property type="entry name" value="ZINC_FINGER_C2H2_1"/>
    <property type="match status" value="3"/>
</dbReference>
<dbReference type="PROSITE" id="PS50157">
    <property type="entry name" value="ZINC_FINGER_C2H2_2"/>
    <property type="match status" value="3"/>
</dbReference>
<sequence>MAAKMEITLSSNTEASSKQERHIIAKLEEKRGPPLQKNCPDPELCRQSFRRFCYQEVSGPQEALSQLRQLCRQWLQPELHTKEQILELLVMEQFLTILPPEIQARVRHRCPMSSKEIVTLVEDFHRASKKPKQWVAVCMQGQKVLLEKTGSQLGEQELPDFQPQTPRRDLRESSPAEPSQAGAYDRLSPHHWEKSPLLQEPTPKLAGTEAPRMRSDNKENPQQEGAKGAKPCAVSAGRSKGNGLQNPEPRGANMSEPRLSRRQVSSPNAQKPFAHYQRHCRVEYISSPLKSHPLRELKKSKGGKRSLSNRLQHLGHQPTRSAKKPYKCDDCGKSFTWNSELKRHKRVHTGERPYTCGECGNCFGRQSTLKLHQRIHTGEKPYQCGQCGKSFRQSSNLHQHHRLHHGD</sequence>
<reference key="1">
    <citation type="journal article" date="1995" name="J. Biol. Chem.">
        <title>Isolation and characterization of a novel zinc-finger protein with transcription repressor activity.</title>
        <authorList>
            <person name="Williams A.J."/>
            <person name="Khachigian L.M."/>
            <person name="Shows T."/>
            <person name="Collins T."/>
        </authorList>
    </citation>
    <scope>NUCLEOTIDE SEQUENCE [MRNA] (ISOFORM 1)</scope>
    <scope>FUNCTION</scope>
</reference>
<reference key="2">
    <citation type="submission" date="2003-05" db="EMBL/GenBank/DDBJ databases">
        <title>Cloning of human full-length CDSs in BD Creator(TM) system donor vector.</title>
        <authorList>
            <person name="Kalnine N."/>
            <person name="Chen X."/>
            <person name="Rolfs A."/>
            <person name="Halleck A."/>
            <person name="Hines L."/>
            <person name="Eisenstein S."/>
            <person name="Koundinya M."/>
            <person name="Raphael J."/>
            <person name="Moreira D."/>
            <person name="Kelley T."/>
            <person name="LaBaer J."/>
            <person name="Lin Y."/>
            <person name="Phelan M."/>
            <person name="Farmer A."/>
        </authorList>
    </citation>
    <scope>NUCLEOTIDE SEQUENCE [LARGE SCALE MRNA] (ISOFORM 2)</scope>
</reference>
<reference key="3">
    <citation type="journal article" date="2004" name="Genome Res.">
        <title>The status, quality, and expansion of the NIH full-length cDNA project: the Mammalian Gene Collection (MGC).</title>
        <authorList>
            <consortium name="The MGC Project Team"/>
        </authorList>
    </citation>
    <scope>NUCLEOTIDE SEQUENCE [LARGE SCALE MRNA] (ISOFORM 2)</scope>
    <source>
        <tissue>Cervix</tissue>
        <tissue>Lung</tissue>
    </source>
</reference>
<reference key="4">
    <citation type="journal article" date="2017" name="Nat. Struct. Mol. Biol.">
        <title>Site-specific mapping of the human SUMO proteome reveals co-modification with phosphorylation.</title>
        <authorList>
            <person name="Hendriks I.A."/>
            <person name="Lyon D."/>
            <person name="Young C."/>
            <person name="Jensen L.J."/>
            <person name="Vertegaal A.C."/>
            <person name="Nielsen M.L."/>
        </authorList>
    </citation>
    <scope>SUMOYLATION [LARGE SCALE ANALYSIS] AT LYS-26; LYS-204; LYS-230 AND LYS-271</scope>
    <scope>IDENTIFICATION BY MASS SPECTROMETRY [LARGE SCALE ANALYSIS]</scope>
</reference>
<reference key="5">
    <citation type="journal article" date="2005" name="Mol. Cell">
        <title>Mammalian SCAN domain dimer is a domain-swapped homolog of the HIV capsid C-terminal domain.</title>
        <authorList>
            <person name="Ivanov D."/>
            <person name="Stone J.R."/>
            <person name="Maki J.L."/>
            <person name="Collins T."/>
            <person name="Wagner G."/>
        </authorList>
    </citation>
    <scope>STRUCTURE BY NMR OF 37-132</scope>
    <scope>SUBUNIT</scope>
</reference>
<protein>
    <recommendedName>
        <fullName>Zinc finger protein 174</fullName>
    </recommendedName>
    <alternativeName>
        <fullName>AW-1</fullName>
    </alternativeName>
    <alternativeName>
        <fullName>Zinc finger and SCAN domain-containing protein 8</fullName>
    </alternativeName>
</protein>
<organism>
    <name type="scientific">Homo sapiens</name>
    <name type="common">Human</name>
    <dbReference type="NCBI Taxonomy" id="9606"/>
    <lineage>
        <taxon>Eukaryota</taxon>
        <taxon>Metazoa</taxon>
        <taxon>Chordata</taxon>
        <taxon>Craniata</taxon>
        <taxon>Vertebrata</taxon>
        <taxon>Euteleostomi</taxon>
        <taxon>Mammalia</taxon>
        <taxon>Eutheria</taxon>
        <taxon>Euarchontoglires</taxon>
        <taxon>Primates</taxon>
        <taxon>Haplorrhini</taxon>
        <taxon>Catarrhini</taxon>
        <taxon>Hominidae</taxon>
        <taxon>Homo</taxon>
    </lineage>
</organism>
<feature type="chain" id="PRO_0000047439" description="Zinc finger protein 174">
    <location>
        <begin position="1"/>
        <end position="407"/>
    </location>
</feature>
<feature type="domain" description="SCAN box" evidence="2">
    <location>
        <begin position="59"/>
        <end position="124"/>
    </location>
</feature>
<feature type="zinc finger region" description="C2H2-type 1" evidence="1">
    <location>
        <begin position="326"/>
        <end position="348"/>
    </location>
</feature>
<feature type="zinc finger region" description="C2H2-type 2" evidence="1">
    <location>
        <begin position="354"/>
        <end position="376"/>
    </location>
</feature>
<feature type="zinc finger region" description="C2H2-type 3" evidence="1">
    <location>
        <begin position="382"/>
        <end position="405"/>
    </location>
</feature>
<feature type="region of interest" description="Disordered" evidence="3">
    <location>
        <begin position="1"/>
        <end position="20"/>
    </location>
</feature>
<feature type="region of interest" description="Disordered" evidence="3">
    <location>
        <begin position="150"/>
        <end position="270"/>
    </location>
</feature>
<feature type="compositionally biased region" description="Basic and acidic residues" evidence="3">
    <location>
        <begin position="211"/>
        <end position="221"/>
    </location>
</feature>
<feature type="cross-link" description="Glycyl lysine isopeptide (Lys-Gly) (interchain with G-Cter in SUMO2)" evidence="9">
    <location>
        <position position="26"/>
    </location>
</feature>
<feature type="cross-link" description="Glycyl lysine isopeptide (Lys-Gly) (interchain with G-Cter in SUMO2)" evidence="9">
    <location>
        <position position="204"/>
    </location>
</feature>
<feature type="cross-link" description="Glycyl lysine isopeptide (Lys-Gly) (interchain with G-Cter in SUMO2)" evidence="9">
    <location>
        <position position="230"/>
    </location>
</feature>
<feature type="cross-link" description="Glycyl lysine isopeptide (Lys-Gly) (interchain with G-Cter in SUMO2)" evidence="9">
    <location>
        <position position="271"/>
    </location>
</feature>
<feature type="splice variant" id="VSP_006897" description="In isoform 2." evidence="6 7">
    <original>APRMRSDNKENPQQEGAKGAKPCAV</original>
    <variation>LLIEKTDPNMATDELPCKLWLSFIA</variation>
    <location>
        <begin position="210"/>
        <end position="234"/>
    </location>
</feature>
<feature type="splice variant" id="VSP_006898" description="In isoform 2." evidence="6 7">
    <location>
        <begin position="235"/>
        <end position="407"/>
    </location>
</feature>
<feature type="strand" evidence="10">
    <location>
        <begin position="41"/>
        <end position="43"/>
    </location>
</feature>
<feature type="helix" evidence="10">
    <location>
        <begin position="44"/>
        <end position="50"/>
    </location>
</feature>
<feature type="helix" evidence="10">
    <location>
        <begin position="61"/>
        <end position="75"/>
    </location>
</feature>
<feature type="helix" evidence="10">
    <location>
        <begin position="82"/>
        <end position="97"/>
    </location>
</feature>
<feature type="helix" evidence="10">
    <location>
        <begin position="101"/>
        <end position="107"/>
    </location>
</feature>
<feature type="helix" evidence="10">
    <location>
        <begin position="114"/>
        <end position="125"/>
    </location>
</feature>
<gene>
    <name type="primary">ZNF174</name>
    <name type="synonym">ZSCAN8</name>
</gene>
<proteinExistence type="evidence at protein level"/>
<name>ZN174_HUMAN</name>
<comment type="function">
    <text evidence="5">Transcriptional repressor.</text>
</comment>
<comment type="subunit">
    <text evidence="4">Homodimer.</text>
</comment>
<comment type="interaction">
    <interactant intactId="EBI-1210452">
        <id>Q15697</id>
    </interactant>
    <interactant intactId="EBI-739949">
        <id>Q9NX65</id>
        <label>ZSCAN32</label>
    </interactant>
    <organismsDiffer>false</organismsDiffer>
    <experiments>4</experiments>
</comment>
<comment type="interaction">
    <interactant intactId="EBI-11158827">
        <id>Q15697-2</id>
    </interactant>
    <interactant intactId="EBI-745846">
        <id>P57086</id>
        <label>SCAND1</label>
    </interactant>
    <organismsDiffer>false</organismsDiffer>
    <experiments>3</experiments>
</comment>
<comment type="interaction">
    <interactant intactId="EBI-11158827">
        <id>Q15697-2</id>
    </interactant>
    <interactant intactId="EBI-707773">
        <id>P17028</id>
        <label>ZNF24</label>
    </interactant>
    <organismsDiffer>false</organismsDiffer>
    <experiments>4</experiments>
</comment>
<comment type="interaction">
    <interactant intactId="EBI-11158827">
        <id>Q15697-2</id>
    </interactant>
    <interactant intactId="EBI-3919096">
        <id>Q8TBC5</id>
        <label>ZSCAN18</label>
    </interactant>
    <organismsDiffer>false</organismsDiffer>
    <experiments>3</experiments>
</comment>
<comment type="interaction">
    <interactant intactId="EBI-11158827">
        <id>Q15697-2</id>
    </interactant>
    <interactant intactId="EBI-10178224">
        <id>P10073</id>
        <label>ZSCAN22</label>
    </interactant>
    <organismsDiffer>false</organismsDiffer>
    <experiments>3</experiments>
</comment>
<comment type="subcellular location">
    <subcellularLocation>
        <location>Nucleus</location>
    </subcellularLocation>
</comment>
<comment type="alternative products">
    <event type="alternative splicing"/>
    <isoform>
        <id>Q15697-1</id>
        <name>1</name>
        <sequence type="displayed"/>
    </isoform>
    <isoform>
        <id>Q15697-2</id>
        <name>2</name>
        <sequence type="described" ref="VSP_006897 VSP_006898"/>
    </isoform>
</comment>
<comment type="tissue specificity">
    <text>Expressed in a variety of organs, but most strongly in adult testis and ovary followed by small intestine, colon, prostate, thymus, spleen, pancreas, skeletal muscle, heart, brain and kidney. Also expressed in umbilical vein endothelial cells, foreskin fibroblast and Hep-G2 cells.</text>
</comment>
<comment type="similarity">
    <text evidence="8">Belongs to the krueppel C2H2-type zinc-finger protein family.</text>
</comment>